<protein>
    <recommendedName>
        <fullName evidence="1">ATP synthase gamma chain</fullName>
    </recommendedName>
    <alternativeName>
        <fullName evidence="1">ATP synthase F1 sector gamma subunit</fullName>
    </alternativeName>
    <alternativeName>
        <fullName evidence="1">F-ATPase gamma subunit</fullName>
    </alternativeName>
</protein>
<proteinExistence type="inferred from homology"/>
<name>ATPG_HELMI</name>
<evidence type="ECO:0000255" key="1">
    <source>
        <dbReference type="HAMAP-Rule" id="MF_00815"/>
    </source>
</evidence>
<accession>B0THN3</accession>
<dbReference type="EMBL" id="CP000930">
    <property type="protein sequence ID" value="ABZ83471.1"/>
    <property type="molecule type" value="Genomic_DNA"/>
</dbReference>
<dbReference type="RefSeq" id="WP_012282000.1">
    <property type="nucleotide sequence ID" value="NC_010337.2"/>
</dbReference>
<dbReference type="SMR" id="B0THN3"/>
<dbReference type="STRING" id="498761.HM1_1103"/>
<dbReference type="KEGG" id="hmo:HM1_1103"/>
<dbReference type="eggNOG" id="COG0224">
    <property type="taxonomic scope" value="Bacteria"/>
</dbReference>
<dbReference type="HOGENOM" id="CLU_050669_0_1_9"/>
<dbReference type="OrthoDB" id="9812769at2"/>
<dbReference type="Proteomes" id="UP000008550">
    <property type="component" value="Chromosome"/>
</dbReference>
<dbReference type="GO" id="GO:0005886">
    <property type="term" value="C:plasma membrane"/>
    <property type="evidence" value="ECO:0007669"/>
    <property type="project" value="UniProtKB-SubCell"/>
</dbReference>
<dbReference type="GO" id="GO:0045259">
    <property type="term" value="C:proton-transporting ATP synthase complex"/>
    <property type="evidence" value="ECO:0007669"/>
    <property type="project" value="UniProtKB-KW"/>
</dbReference>
<dbReference type="GO" id="GO:0005524">
    <property type="term" value="F:ATP binding"/>
    <property type="evidence" value="ECO:0007669"/>
    <property type="project" value="UniProtKB-UniRule"/>
</dbReference>
<dbReference type="GO" id="GO:0046933">
    <property type="term" value="F:proton-transporting ATP synthase activity, rotational mechanism"/>
    <property type="evidence" value="ECO:0007669"/>
    <property type="project" value="UniProtKB-UniRule"/>
</dbReference>
<dbReference type="GO" id="GO:0042777">
    <property type="term" value="P:proton motive force-driven plasma membrane ATP synthesis"/>
    <property type="evidence" value="ECO:0007669"/>
    <property type="project" value="UniProtKB-UniRule"/>
</dbReference>
<dbReference type="CDD" id="cd12151">
    <property type="entry name" value="F1-ATPase_gamma"/>
    <property type="match status" value="1"/>
</dbReference>
<dbReference type="FunFam" id="3.40.1380.10:FF:000006">
    <property type="entry name" value="ATP synthase gamma chain"/>
    <property type="match status" value="1"/>
</dbReference>
<dbReference type="FunFam" id="1.10.287.80:FF:000003">
    <property type="entry name" value="ATP synthase gamma chain, chloroplastic"/>
    <property type="match status" value="1"/>
</dbReference>
<dbReference type="Gene3D" id="3.40.1380.10">
    <property type="match status" value="1"/>
</dbReference>
<dbReference type="Gene3D" id="1.10.287.80">
    <property type="entry name" value="ATP synthase, gamma subunit, helix hairpin domain"/>
    <property type="match status" value="1"/>
</dbReference>
<dbReference type="HAMAP" id="MF_00815">
    <property type="entry name" value="ATP_synth_gamma_bact"/>
    <property type="match status" value="1"/>
</dbReference>
<dbReference type="InterPro" id="IPR035968">
    <property type="entry name" value="ATP_synth_F1_ATPase_gsu"/>
</dbReference>
<dbReference type="InterPro" id="IPR000131">
    <property type="entry name" value="ATP_synth_F1_gsu"/>
</dbReference>
<dbReference type="InterPro" id="IPR023632">
    <property type="entry name" value="ATP_synth_F1_gsu_CS"/>
</dbReference>
<dbReference type="NCBIfam" id="TIGR01146">
    <property type="entry name" value="ATPsyn_F1gamma"/>
    <property type="match status" value="1"/>
</dbReference>
<dbReference type="NCBIfam" id="NF004145">
    <property type="entry name" value="PRK05621.1-2"/>
    <property type="match status" value="1"/>
</dbReference>
<dbReference type="PANTHER" id="PTHR11693">
    <property type="entry name" value="ATP SYNTHASE GAMMA CHAIN"/>
    <property type="match status" value="1"/>
</dbReference>
<dbReference type="PANTHER" id="PTHR11693:SF22">
    <property type="entry name" value="ATP SYNTHASE SUBUNIT GAMMA, MITOCHONDRIAL"/>
    <property type="match status" value="1"/>
</dbReference>
<dbReference type="Pfam" id="PF00231">
    <property type="entry name" value="ATP-synt"/>
    <property type="match status" value="1"/>
</dbReference>
<dbReference type="PRINTS" id="PR00126">
    <property type="entry name" value="ATPASEGAMMA"/>
</dbReference>
<dbReference type="SUPFAM" id="SSF52943">
    <property type="entry name" value="ATP synthase (F1-ATPase), gamma subunit"/>
    <property type="match status" value="1"/>
</dbReference>
<dbReference type="PROSITE" id="PS00153">
    <property type="entry name" value="ATPASE_GAMMA"/>
    <property type="match status" value="1"/>
</dbReference>
<organism>
    <name type="scientific">Heliobacterium modesticaldum (strain ATCC 51547 / Ice1)</name>
    <dbReference type="NCBI Taxonomy" id="498761"/>
    <lineage>
        <taxon>Bacteria</taxon>
        <taxon>Bacillati</taxon>
        <taxon>Bacillota</taxon>
        <taxon>Clostridia</taxon>
        <taxon>Eubacteriales</taxon>
        <taxon>Heliobacteriaceae</taxon>
        <taxon>Heliomicrobium</taxon>
    </lineage>
</organism>
<keyword id="KW-0066">ATP synthesis</keyword>
<keyword id="KW-1003">Cell membrane</keyword>
<keyword id="KW-0139">CF(1)</keyword>
<keyword id="KW-0375">Hydrogen ion transport</keyword>
<keyword id="KW-0406">Ion transport</keyword>
<keyword id="KW-0472">Membrane</keyword>
<keyword id="KW-1185">Reference proteome</keyword>
<keyword id="KW-0813">Transport</keyword>
<comment type="function">
    <text evidence="1">Produces ATP from ADP in the presence of a proton gradient across the membrane. The gamma chain is believed to be important in regulating ATPase activity and the flow of protons through the CF(0) complex.</text>
</comment>
<comment type="subunit">
    <text evidence="1">F-type ATPases have 2 components, CF(1) - the catalytic core - and CF(0) - the membrane proton channel. CF(1) has five subunits: alpha(3), beta(3), gamma(1), delta(1), epsilon(1). CF(0) has three main subunits: a, b and c.</text>
</comment>
<comment type="subcellular location">
    <subcellularLocation>
        <location evidence="1">Cell membrane</location>
        <topology evidence="1">Peripheral membrane protein</topology>
    </subcellularLocation>
</comment>
<comment type="similarity">
    <text evidence="1">Belongs to the ATPase gamma chain family.</text>
</comment>
<gene>
    <name evidence="1" type="primary">atpG</name>
    <name type="ordered locus">Helmi_08460</name>
    <name type="ORF">HM1_1103</name>
</gene>
<sequence length="290" mass="31882">MPGMRDIKRRIRSIKSTQQITKAMKMVAAAKLRKAQEKVIQARPYAKRIQGVLSRLVAAASDVNHPLLTTREVKRVGYVVITADRGLCGGYNANIIRKVNNEIKGRDDVSLVCVGRKSRDFFKRMGKRIEADYVGLGEDISFGMAKEIAAKVMELYEQGTVDQVQLVFTEFYSALTQKPVQMQLLPIPAQAGESANSAKDSKGPQPLYAFEPSPEAVLDELLPKYVENQIYRALLESKASEQGARMTAMGSATDNAKEMINKLTLSFNRARQAAITKEISEVVGGAAALG</sequence>
<feature type="chain" id="PRO_1000134158" description="ATP synthase gamma chain">
    <location>
        <begin position="1"/>
        <end position="290"/>
    </location>
</feature>
<reference key="1">
    <citation type="journal article" date="2008" name="J. Bacteriol.">
        <title>The genome of Heliobacterium modesticaldum, a phototrophic representative of the Firmicutes containing the simplest photosynthetic apparatus.</title>
        <authorList>
            <person name="Sattley W.M."/>
            <person name="Madigan M.T."/>
            <person name="Swingley W.D."/>
            <person name="Cheung P.C."/>
            <person name="Clocksin K.M."/>
            <person name="Conrad A.L."/>
            <person name="Dejesa L.C."/>
            <person name="Honchak B.M."/>
            <person name="Jung D.O."/>
            <person name="Karbach L.E."/>
            <person name="Kurdoglu A."/>
            <person name="Lahiri S."/>
            <person name="Mastrian S.D."/>
            <person name="Page L.E."/>
            <person name="Taylor H.L."/>
            <person name="Wang Z.T."/>
            <person name="Raymond J."/>
            <person name="Chen M."/>
            <person name="Blankenship R.E."/>
            <person name="Touchman J.W."/>
        </authorList>
    </citation>
    <scope>NUCLEOTIDE SEQUENCE [LARGE SCALE GENOMIC DNA]</scope>
    <source>
        <strain>ATCC 51547 / Ice1</strain>
    </source>
</reference>